<gene>
    <name type="ordered locus">VV2847</name>
</gene>
<comment type="similarity">
    <text evidence="1">Belongs to the UPF0149 family.</text>
</comment>
<sequence>MSKNQLPSYQVVADEMKMATLAVTPAELHGLLAGMISGGLSQQDQSWQPMLFDYTNDGMGWPSAALEQAQALFNVTSAQLTSDEMVLNLLLPNAEGEEAIFALADALSDWVNHYISGLGLAGAALNKASEEAKEALADLEEMARLGVDEDDDLQEQAELLEQVIEHVKACALLIHAEFGAKTSSSETPTIH</sequence>
<reference key="1">
    <citation type="journal article" date="2003" name="Genome Res.">
        <title>Comparative genome analysis of Vibrio vulnificus, a marine pathogen.</title>
        <authorList>
            <person name="Chen C.-Y."/>
            <person name="Wu K.-M."/>
            <person name="Chang Y.-C."/>
            <person name="Chang C.-H."/>
            <person name="Tsai H.-C."/>
            <person name="Liao T.-L."/>
            <person name="Liu Y.-M."/>
            <person name="Chen H.-J."/>
            <person name="Shen A.B.-T."/>
            <person name="Li J.-C."/>
            <person name="Su T.-L."/>
            <person name="Shao C.-P."/>
            <person name="Lee C.-T."/>
            <person name="Hor L.-I."/>
            <person name="Tsai S.-F."/>
        </authorList>
    </citation>
    <scope>NUCLEOTIDE SEQUENCE [LARGE SCALE GENOMIC DNA]</scope>
    <source>
        <strain>YJ016</strain>
    </source>
</reference>
<dbReference type="EMBL" id="BA000037">
    <property type="protein sequence ID" value="BAC95611.1"/>
    <property type="molecule type" value="Genomic_DNA"/>
</dbReference>
<dbReference type="RefSeq" id="WP_011151175.1">
    <property type="nucleotide sequence ID" value="NC_005139.1"/>
</dbReference>
<dbReference type="SMR" id="Q7MHM2"/>
<dbReference type="STRING" id="672.VV93_v1c25550"/>
<dbReference type="KEGG" id="vvy:VV2847"/>
<dbReference type="PATRIC" id="fig|196600.6.peg.2835"/>
<dbReference type="eggNOG" id="COG3079">
    <property type="taxonomic scope" value="Bacteria"/>
</dbReference>
<dbReference type="HOGENOM" id="CLU_085336_1_0_6"/>
<dbReference type="Proteomes" id="UP000002675">
    <property type="component" value="Chromosome I"/>
</dbReference>
<dbReference type="GO" id="GO:0005829">
    <property type="term" value="C:cytosol"/>
    <property type="evidence" value="ECO:0007669"/>
    <property type="project" value="TreeGrafter"/>
</dbReference>
<dbReference type="Gene3D" id="1.20.120.740">
    <property type="entry name" value="YgfB uncharacterised protein family UPF0149, PF03695"/>
    <property type="match status" value="1"/>
</dbReference>
<dbReference type="HAMAP" id="MF_00346">
    <property type="entry name" value="UPF0149"/>
    <property type="match status" value="1"/>
</dbReference>
<dbReference type="InterPro" id="IPR011978">
    <property type="entry name" value="YgfB-like"/>
</dbReference>
<dbReference type="InterPro" id="IPR036255">
    <property type="entry name" value="YgfB-like_sf"/>
</dbReference>
<dbReference type="NCBIfam" id="NF002477">
    <property type="entry name" value="PRK01736.1"/>
    <property type="match status" value="1"/>
</dbReference>
<dbReference type="NCBIfam" id="TIGR02292">
    <property type="entry name" value="ygfB_yecA"/>
    <property type="match status" value="1"/>
</dbReference>
<dbReference type="PANTHER" id="PTHR37528">
    <property type="entry name" value="UPF0149 PROTEIN YGFB"/>
    <property type="match status" value="1"/>
</dbReference>
<dbReference type="PANTHER" id="PTHR37528:SF1">
    <property type="entry name" value="UPF0149 PROTEIN YGFB"/>
    <property type="match status" value="1"/>
</dbReference>
<dbReference type="Pfam" id="PF03695">
    <property type="entry name" value="UPF0149"/>
    <property type="match status" value="1"/>
</dbReference>
<dbReference type="SUPFAM" id="SSF101327">
    <property type="entry name" value="YgfB-like"/>
    <property type="match status" value="1"/>
</dbReference>
<proteinExistence type="inferred from homology"/>
<protein>
    <recommendedName>
        <fullName evidence="1">UPF0149 protein VV2847</fullName>
    </recommendedName>
</protein>
<organism>
    <name type="scientific">Vibrio vulnificus (strain YJ016)</name>
    <dbReference type="NCBI Taxonomy" id="196600"/>
    <lineage>
        <taxon>Bacteria</taxon>
        <taxon>Pseudomonadati</taxon>
        <taxon>Pseudomonadota</taxon>
        <taxon>Gammaproteobacteria</taxon>
        <taxon>Vibrionales</taxon>
        <taxon>Vibrionaceae</taxon>
        <taxon>Vibrio</taxon>
    </lineage>
</organism>
<accession>Q7MHM2</accession>
<name>Y2847_VIBVY</name>
<evidence type="ECO:0000255" key="1">
    <source>
        <dbReference type="HAMAP-Rule" id="MF_00346"/>
    </source>
</evidence>
<feature type="chain" id="PRO_0000207573" description="UPF0149 protein VV2847">
    <location>
        <begin position="1"/>
        <end position="191"/>
    </location>
</feature>